<proteinExistence type="inferred from homology"/>
<accession>Q4UTC7</accession>
<comment type="function">
    <text evidence="1">Part of the MsrPQ system that repairs oxidized periplasmic proteins containing methionine sulfoxide residues (Met-O), using respiratory chain electrons. Thus protects these proteins from oxidative-stress damage caused by reactive species of oxygen and chlorine generated by the host defense mechanisms. MsrPQ is essential for the maintenance of envelope integrity under bleach stress, rescuing a wide series of structurally unrelated periplasmic proteins from methionine oxidation. MsrQ provides electrons for reduction to the reductase catalytic subunit MsrP, using the quinone pool of the respiratory chain.</text>
</comment>
<comment type="cofactor">
    <cofactor evidence="1">
        <name>FMN</name>
        <dbReference type="ChEBI" id="CHEBI:58210"/>
    </cofactor>
    <text evidence="1">Binds 1 FMN per subunit.</text>
</comment>
<comment type="cofactor">
    <cofactor evidence="1">
        <name>heme b</name>
        <dbReference type="ChEBI" id="CHEBI:60344"/>
    </cofactor>
    <text evidence="1">Binds 1 heme b (iron(II)-protoporphyrin IX) group per subunit.</text>
</comment>
<comment type="subunit">
    <text evidence="1">Heterodimer of a catalytic subunit (MsrP) and a heme-binding subunit (MsrQ).</text>
</comment>
<comment type="subcellular location">
    <subcellularLocation>
        <location evidence="1">Cell inner membrane</location>
        <topology evidence="1">Multi-pass membrane protein</topology>
    </subcellularLocation>
</comment>
<comment type="similarity">
    <text evidence="1">Belongs to the MsrQ family.</text>
</comment>
<evidence type="ECO:0000255" key="1">
    <source>
        <dbReference type="HAMAP-Rule" id="MF_01207"/>
    </source>
</evidence>
<organism>
    <name type="scientific">Xanthomonas campestris pv. campestris (strain 8004)</name>
    <dbReference type="NCBI Taxonomy" id="314565"/>
    <lineage>
        <taxon>Bacteria</taxon>
        <taxon>Pseudomonadati</taxon>
        <taxon>Pseudomonadota</taxon>
        <taxon>Gammaproteobacteria</taxon>
        <taxon>Lysobacterales</taxon>
        <taxon>Lysobacteraceae</taxon>
        <taxon>Xanthomonas</taxon>
    </lineage>
</organism>
<gene>
    <name evidence="1" type="primary">msrQ</name>
    <name type="ordered locus">XC_2647</name>
</gene>
<name>MSRQ_XANC8</name>
<reference key="1">
    <citation type="journal article" date="2005" name="Genome Res.">
        <title>Comparative and functional genomic analyses of the pathogenicity of phytopathogen Xanthomonas campestris pv. campestris.</title>
        <authorList>
            <person name="Qian W."/>
            <person name="Jia Y."/>
            <person name="Ren S.-X."/>
            <person name="He Y.-Q."/>
            <person name="Feng J.-X."/>
            <person name="Lu L.-F."/>
            <person name="Sun Q."/>
            <person name="Ying G."/>
            <person name="Tang D.-J."/>
            <person name="Tang H."/>
            <person name="Wu W."/>
            <person name="Hao P."/>
            <person name="Wang L."/>
            <person name="Jiang B.-L."/>
            <person name="Zeng S."/>
            <person name="Gu W.-Y."/>
            <person name="Lu G."/>
            <person name="Rong L."/>
            <person name="Tian Y."/>
            <person name="Yao Z."/>
            <person name="Fu G."/>
            <person name="Chen B."/>
            <person name="Fang R."/>
            <person name="Qiang B."/>
            <person name="Chen Z."/>
            <person name="Zhao G.-P."/>
            <person name="Tang J.-L."/>
            <person name="He C."/>
        </authorList>
    </citation>
    <scope>NUCLEOTIDE SEQUENCE [LARGE SCALE GENOMIC DNA]</scope>
    <source>
        <strain>8004</strain>
    </source>
</reference>
<keyword id="KW-0997">Cell inner membrane</keyword>
<keyword id="KW-1003">Cell membrane</keyword>
<keyword id="KW-0249">Electron transport</keyword>
<keyword id="KW-0285">Flavoprotein</keyword>
<keyword id="KW-0288">FMN</keyword>
<keyword id="KW-0349">Heme</keyword>
<keyword id="KW-0408">Iron</keyword>
<keyword id="KW-0472">Membrane</keyword>
<keyword id="KW-0479">Metal-binding</keyword>
<keyword id="KW-0812">Transmembrane</keyword>
<keyword id="KW-1133">Transmembrane helix</keyword>
<keyword id="KW-0813">Transport</keyword>
<dbReference type="EMBL" id="CP000050">
    <property type="protein sequence ID" value="AAY49696.1"/>
    <property type="molecule type" value="Genomic_DNA"/>
</dbReference>
<dbReference type="RefSeq" id="WP_011036769.1">
    <property type="nucleotide sequence ID" value="NZ_CP155948.1"/>
</dbReference>
<dbReference type="SMR" id="Q4UTC7"/>
<dbReference type="KEGG" id="xcb:XC_2647"/>
<dbReference type="HOGENOM" id="CLU_080662_0_1_6"/>
<dbReference type="Proteomes" id="UP000000420">
    <property type="component" value="Chromosome"/>
</dbReference>
<dbReference type="GO" id="GO:0005886">
    <property type="term" value="C:plasma membrane"/>
    <property type="evidence" value="ECO:0007669"/>
    <property type="project" value="UniProtKB-SubCell"/>
</dbReference>
<dbReference type="GO" id="GO:0009055">
    <property type="term" value="F:electron transfer activity"/>
    <property type="evidence" value="ECO:0007669"/>
    <property type="project" value="UniProtKB-UniRule"/>
</dbReference>
<dbReference type="GO" id="GO:0010181">
    <property type="term" value="F:FMN binding"/>
    <property type="evidence" value="ECO:0007669"/>
    <property type="project" value="UniProtKB-UniRule"/>
</dbReference>
<dbReference type="GO" id="GO:0020037">
    <property type="term" value="F:heme binding"/>
    <property type="evidence" value="ECO:0007669"/>
    <property type="project" value="UniProtKB-UniRule"/>
</dbReference>
<dbReference type="GO" id="GO:0046872">
    <property type="term" value="F:metal ion binding"/>
    <property type="evidence" value="ECO:0007669"/>
    <property type="project" value="UniProtKB-KW"/>
</dbReference>
<dbReference type="GO" id="GO:0016679">
    <property type="term" value="F:oxidoreductase activity, acting on diphenols and related substances as donors"/>
    <property type="evidence" value="ECO:0007669"/>
    <property type="project" value="TreeGrafter"/>
</dbReference>
<dbReference type="GO" id="GO:0030091">
    <property type="term" value="P:protein repair"/>
    <property type="evidence" value="ECO:0007669"/>
    <property type="project" value="UniProtKB-UniRule"/>
</dbReference>
<dbReference type="HAMAP" id="MF_01207">
    <property type="entry name" value="MsrQ"/>
    <property type="match status" value="1"/>
</dbReference>
<dbReference type="InterPro" id="IPR013130">
    <property type="entry name" value="Fe3_Rdtase_TM_dom"/>
</dbReference>
<dbReference type="InterPro" id="IPR022837">
    <property type="entry name" value="MsrQ-like"/>
</dbReference>
<dbReference type="NCBIfam" id="NF003835">
    <property type="entry name" value="PRK05419.2-2"/>
    <property type="match status" value="1"/>
</dbReference>
<dbReference type="PANTHER" id="PTHR36964">
    <property type="entry name" value="PROTEIN-METHIONINE-SULFOXIDE REDUCTASE HEME-BINDING SUBUNIT MSRQ"/>
    <property type="match status" value="1"/>
</dbReference>
<dbReference type="PANTHER" id="PTHR36964:SF1">
    <property type="entry name" value="PROTEIN-METHIONINE-SULFOXIDE REDUCTASE HEME-BINDING SUBUNIT MSRQ"/>
    <property type="match status" value="1"/>
</dbReference>
<dbReference type="Pfam" id="PF01794">
    <property type="entry name" value="Ferric_reduct"/>
    <property type="match status" value="1"/>
</dbReference>
<sequence length="218" mass="24940">MAKKSVSVIAAKTAVHAAVLAPIALLGWQFWQVWQQGSDALGADPVAEIEHRTGLWALRLLLITLAITPLRQLTGQAVLIRFRRMLGLYAFFYASVHLTAYLWLDLRGFWTQIFEEIVKRPYITVGFTAWLLLVPLAITSTQGWMRRLKRNWGRLHMLIYPIGLLAVLHFWWLVKSDIREPALYAGILALLLGWRVWKRLSARRTTARHSAPPPATPR</sequence>
<protein>
    <recommendedName>
        <fullName evidence="1">Protein-methionine-sulfoxide reductase heme-binding subunit MsrQ</fullName>
    </recommendedName>
    <alternativeName>
        <fullName evidence="1">Flavocytochrome MsrQ</fullName>
    </alternativeName>
</protein>
<feature type="chain" id="PRO_1000066190" description="Protein-methionine-sulfoxide reductase heme-binding subunit MsrQ">
    <location>
        <begin position="1"/>
        <end position="218"/>
    </location>
</feature>
<feature type="transmembrane region" description="Helical" evidence="1">
    <location>
        <begin position="14"/>
        <end position="34"/>
    </location>
</feature>
<feature type="transmembrane region" description="Helical" evidence="1">
    <location>
        <begin position="60"/>
        <end position="80"/>
    </location>
</feature>
<feature type="transmembrane region" description="Helical" evidence="1">
    <location>
        <begin position="86"/>
        <end position="106"/>
    </location>
</feature>
<feature type="transmembrane region" description="Helical" evidence="1">
    <location>
        <begin position="121"/>
        <end position="141"/>
    </location>
</feature>
<feature type="transmembrane region" description="Helical" evidence="1">
    <location>
        <begin position="155"/>
        <end position="175"/>
    </location>
</feature>